<comment type="function">
    <text evidence="1">Excises uracil residues from the DNA which can arise as a result of misincorporation of dUMP residues by DNA polymerase or due to deamination of cytosine.</text>
</comment>
<comment type="catalytic activity">
    <reaction evidence="1">
        <text>Hydrolyzes single-stranded DNA or mismatched double-stranded DNA and polynucleotides, releasing free uracil.</text>
        <dbReference type="EC" id="3.2.2.27"/>
    </reaction>
</comment>
<comment type="subcellular location">
    <subcellularLocation>
        <location evidence="1">Cytoplasm</location>
    </subcellularLocation>
</comment>
<comment type="similarity">
    <text evidence="1">Belongs to the uracil-DNA glycosylase (UDG) superfamily. UNG family.</text>
</comment>
<name>UNG_STRGC</name>
<evidence type="ECO:0000255" key="1">
    <source>
        <dbReference type="HAMAP-Rule" id="MF_00148"/>
    </source>
</evidence>
<reference key="1">
    <citation type="journal article" date="2007" name="J. Bacteriol.">
        <title>Genome-wide transcriptional changes in Streptococcus gordonii in response to competence signaling peptide.</title>
        <authorList>
            <person name="Vickerman M.M."/>
            <person name="Iobst S."/>
            <person name="Jesionowski A.M."/>
            <person name="Gill S.R."/>
        </authorList>
    </citation>
    <scope>NUCLEOTIDE SEQUENCE [LARGE SCALE GENOMIC DNA]</scope>
    <source>
        <strain>Challis / ATCC 35105 / BCRC 15272 / CH1 / DL1 / V288</strain>
    </source>
</reference>
<accession>A8AXM4</accession>
<organism>
    <name type="scientific">Streptococcus gordonii (strain Challis / ATCC 35105 / BCRC 15272 / CH1 / DL1 / V288)</name>
    <dbReference type="NCBI Taxonomy" id="467705"/>
    <lineage>
        <taxon>Bacteria</taxon>
        <taxon>Bacillati</taxon>
        <taxon>Bacillota</taxon>
        <taxon>Bacilli</taxon>
        <taxon>Lactobacillales</taxon>
        <taxon>Streptococcaceae</taxon>
        <taxon>Streptococcus</taxon>
    </lineage>
</organism>
<dbReference type="EC" id="3.2.2.27" evidence="1"/>
<dbReference type="EMBL" id="CP000725">
    <property type="protein sequence ID" value="ABV09660.1"/>
    <property type="molecule type" value="Genomic_DNA"/>
</dbReference>
<dbReference type="RefSeq" id="WP_012000645.1">
    <property type="nucleotide sequence ID" value="NC_009785.1"/>
</dbReference>
<dbReference type="SMR" id="A8AXM4"/>
<dbReference type="STRING" id="467705.SGO_1250"/>
<dbReference type="KEGG" id="sgo:SGO_1250"/>
<dbReference type="eggNOG" id="COG0692">
    <property type="taxonomic scope" value="Bacteria"/>
</dbReference>
<dbReference type="HOGENOM" id="CLU_032162_3_1_9"/>
<dbReference type="Proteomes" id="UP000001131">
    <property type="component" value="Chromosome"/>
</dbReference>
<dbReference type="GO" id="GO:0005737">
    <property type="term" value="C:cytoplasm"/>
    <property type="evidence" value="ECO:0007669"/>
    <property type="project" value="UniProtKB-SubCell"/>
</dbReference>
<dbReference type="GO" id="GO:0004844">
    <property type="term" value="F:uracil DNA N-glycosylase activity"/>
    <property type="evidence" value="ECO:0007669"/>
    <property type="project" value="UniProtKB-UniRule"/>
</dbReference>
<dbReference type="GO" id="GO:0097510">
    <property type="term" value="P:base-excision repair, AP site formation via deaminated base removal"/>
    <property type="evidence" value="ECO:0007669"/>
    <property type="project" value="TreeGrafter"/>
</dbReference>
<dbReference type="CDD" id="cd10027">
    <property type="entry name" value="UDG-F1-like"/>
    <property type="match status" value="1"/>
</dbReference>
<dbReference type="FunFam" id="3.40.470.10:FF:000008">
    <property type="entry name" value="Uracil-DNA glycosylase"/>
    <property type="match status" value="1"/>
</dbReference>
<dbReference type="Gene3D" id="3.40.470.10">
    <property type="entry name" value="Uracil-DNA glycosylase-like domain"/>
    <property type="match status" value="1"/>
</dbReference>
<dbReference type="HAMAP" id="MF_00148">
    <property type="entry name" value="UDG"/>
    <property type="match status" value="1"/>
</dbReference>
<dbReference type="InterPro" id="IPR002043">
    <property type="entry name" value="UDG_fam1"/>
</dbReference>
<dbReference type="InterPro" id="IPR018085">
    <property type="entry name" value="Ura-DNA_Glyclase_AS"/>
</dbReference>
<dbReference type="InterPro" id="IPR005122">
    <property type="entry name" value="Uracil-DNA_glycosylase-like"/>
</dbReference>
<dbReference type="InterPro" id="IPR036895">
    <property type="entry name" value="Uracil-DNA_glycosylase-like_sf"/>
</dbReference>
<dbReference type="NCBIfam" id="NF003588">
    <property type="entry name" value="PRK05254.1-1"/>
    <property type="match status" value="1"/>
</dbReference>
<dbReference type="NCBIfam" id="NF003589">
    <property type="entry name" value="PRK05254.1-2"/>
    <property type="match status" value="1"/>
</dbReference>
<dbReference type="NCBIfam" id="NF003591">
    <property type="entry name" value="PRK05254.1-4"/>
    <property type="match status" value="1"/>
</dbReference>
<dbReference type="NCBIfam" id="NF003592">
    <property type="entry name" value="PRK05254.1-5"/>
    <property type="match status" value="1"/>
</dbReference>
<dbReference type="NCBIfam" id="TIGR00628">
    <property type="entry name" value="ung"/>
    <property type="match status" value="1"/>
</dbReference>
<dbReference type="PANTHER" id="PTHR11264">
    <property type="entry name" value="URACIL-DNA GLYCOSYLASE"/>
    <property type="match status" value="1"/>
</dbReference>
<dbReference type="PANTHER" id="PTHR11264:SF0">
    <property type="entry name" value="URACIL-DNA GLYCOSYLASE"/>
    <property type="match status" value="1"/>
</dbReference>
<dbReference type="Pfam" id="PF03167">
    <property type="entry name" value="UDG"/>
    <property type="match status" value="1"/>
</dbReference>
<dbReference type="SMART" id="SM00986">
    <property type="entry name" value="UDG"/>
    <property type="match status" value="1"/>
</dbReference>
<dbReference type="SMART" id="SM00987">
    <property type="entry name" value="UreE_C"/>
    <property type="match status" value="1"/>
</dbReference>
<dbReference type="SUPFAM" id="SSF52141">
    <property type="entry name" value="Uracil-DNA glycosylase-like"/>
    <property type="match status" value="1"/>
</dbReference>
<dbReference type="PROSITE" id="PS00130">
    <property type="entry name" value="U_DNA_GLYCOSYLASE"/>
    <property type="match status" value="1"/>
</dbReference>
<sequence length="217" mass="23934">MQHSAWHTLIKEQLPEGYFAKINHFLDEVYASGTIYPPREKVFNAIQTTDLADVKVVILGQDPYHGPKQAQGLSFSVPDDIPAPPSLQNILKELADDIGVKESHDLTSWAQQGVLLLNAGLTVPAGQANAHAGLIWEPFTDAIIKVVNEKSDPVVFILWGSYARKKKNLISNSQHLIIESAHPSPLSAYRGFFGSKPFSRTNDFLVAKGLEPINWLA</sequence>
<keyword id="KW-0963">Cytoplasm</keyword>
<keyword id="KW-0227">DNA damage</keyword>
<keyword id="KW-0234">DNA repair</keyword>
<keyword id="KW-0378">Hydrolase</keyword>
<keyword id="KW-1185">Reference proteome</keyword>
<protein>
    <recommendedName>
        <fullName evidence="1">Uracil-DNA glycosylase</fullName>
        <shortName evidence="1">UDG</shortName>
        <ecNumber evidence="1">3.2.2.27</ecNumber>
    </recommendedName>
</protein>
<proteinExistence type="inferred from homology"/>
<feature type="chain" id="PRO_1000076683" description="Uracil-DNA glycosylase">
    <location>
        <begin position="1"/>
        <end position="217"/>
    </location>
</feature>
<feature type="active site" description="Proton acceptor" evidence="1">
    <location>
        <position position="62"/>
    </location>
</feature>
<gene>
    <name evidence="1" type="primary">ung</name>
    <name type="ordered locus">SGO_1250</name>
</gene>